<name>Y098_GVCL</name>
<accession>P41729</accession>
<reference key="1">
    <citation type="journal article" date="1994" name="J. Gen. Virol.">
        <title>Genome organization of the DNA-binding protein gene region of Cryptophlebia leucotreta granulosis virus is closely related to that of nuclear polyhedrosis viruses.</title>
        <authorList>
            <person name="Jehle J.A."/>
            <person name="Backhaus H."/>
        </authorList>
    </citation>
    <scope>NUCLEOTIDE SEQUENCE [GENOMIC DNA]</scope>
</reference>
<reference key="2">
    <citation type="journal article" date="2003" name="Virology">
        <title>The genome of the Cryptophlebia leucotreta granulovirus.</title>
        <authorList>
            <person name="Lange M."/>
            <person name="Jehle J.A."/>
        </authorList>
    </citation>
    <scope>NUCLEOTIDE SEQUENCE [LARGE SCALE GENOMIC DNA]</scope>
    <source>
        <strain>CV3</strain>
    </source>
</reference>
<organismHost>
    <name type="scientific">Tortricidae</name>
    <dbReference type="NCBI Taxonomy" id="7139"/>
</organismHost>
<comment type="caution">
    <text evidence="1">It is uncertain whether Met-1 or Met-42 is the initiator.</text>
</comment>
<feature type="chain" id="PRO_0000133033" description="Uncharacterized 41.0 kDa protein in P143-LEF5 intergenic region">
    <location>
        <begin position="1"/>
        <end position="343"/>
    </location>
</feature>
<organism>
    <name type="scientific">Cryptophlebia leucotreta granulosis virus</name>
    <name type="common">ClGV</name>
    <name type="synonym">Cryptophlebia leucotreta granulovirus</name>
    <dbReference type="NCBI Taxonomy" id="35254"/>
    <lineage>
        <taxon>Viruses</taxon>
        <taxon>Viruses incertae sedis</taxon>
        <taxon>Naldaviricetes</taxon>
        <taxon>Lefavirales</taxon>
        <taxon>Baculoviridae</taxon>
        <taxon>Betabaculovirus</taxon>
        <taxon>Betabaculovirus cryleucotretae</taxon>
    </lineage>
</organism>
<protein>
    <recommendedName>
        <fullName>Uncharacterized 41.0 kDa protein in P143-LEF5 intergenic region</fullName>
    </recommendedName>
</protein>
<proteinExistence type="predicted"/>
<sequence>MTGVMKVKSSVFNILRIVRYKVINETVVIVFLSKFTKHIKQMNHRWTVLRNSWSLTKRHILFVTKYSDLKDIQKELLNSVEFVVFIGDFTKSIFFSDYKMDNIVCKDEMQDFRQHFKTKYKLSYMGHIFVIPHKQPTYDLLTEWLVCNIYSLQEITNINTIYFEPPHVVVFDMDSTLITDEDQVRIRDPAIYEALDALKKYNCVLCLWSYGDKEHVVNSLNKVKLDGYFKIILSGGRKAGEYQLNEEEDRYYNVYYESTPFYLNMTDVKNIPKSPRVVLWYLINHNIVLFKTLTLVDDLFDNNIYYDNFVNLSTCPVPVNDWDKWHTQIVRFIVNYDKKFKNY</sequence>
<evidence type="ECO:0000305" key="1"/>
<dbReference type="EMBL" id="AY229987">
    <property type="protein sequence ID" value="AAQ21674.1"/>
    <property type="molecule type" value="Genomic_DNA"/>
</dbReference>
<dbReference type="RefSeq" id="NP_891926.1">
    <property type="nucleotide sequence ID" value="NC_005068.1"/>
</dbReference>
<dbReference type="SMR" id="P41729"/>
<dbReference type="GeneID" id="1724985"/>
<dbReference type="KEGG" id="vg:1724985"/>
<dbReference type="OrthoDB" id="4999at10239"/>
<dbReference type="Proteomes" id="UP000203359">
    <property type="component" value="Genome"/>
</dbReference>
<dbReference type="InterPro" id="IPR007827">
    <property type="entry name" value="DUF705"/>
</dbReference>
<dbReference type="InterPro" id="IPR036412">
    <property type="entry name" value="HAD-like_sf"/>
</dbReference>
<dbReference type="InterPro" id="IPR010033">
    <property type="entry name" value="HAD_SF_ppase_IIIC"/>
</dbReference>
<dbReference type="NCBIfam" id="TIGR01681">
    <property type="entry name" value="HAD-SF-IIIC"/>
    <property type="match status" value="1"/>
</dbReference>
<dbReference type="NCBIfam" id="TIGR01684">
    <property type="entry name" value="viral_ppase"/>
    <property type="match status" value="1"/>
</dbReference>
<dbReference type="Pfam" id="PF05152">
    <property type="entry name" value="DUF705"/>
    <property type="match status" value="1"/>
</dbReference>
<dbReference type="SUPFAM" id="SSF56784">
    <property type="entry name" value="HAD-like"/>
    <property type="match status" value="1"/>
</dbReference>
<keyword id="KW-1185">Reference proteome</keyword>